<feature type="chain" id="PRO_0000362814" description="NAD(P)H-quinone oxidoreductase subunit 3, chloroplastic">
    <location>
        <begin position="1"/>
        <end position="120"/>
    </location>
</feature>
<feature type="transmembrane region" description="Helical" evidence="1">
    <location>
        <begin position="9"/>
        <end position="29"/>
    </location>
</feature>
<feature type="transmembrane region" description="Helical" evidence="1">
    <location>
        <begin position="64"/>
        <end position="84"/>
    </location>
</feature>
<feature type="transmembrane region" description="Helical" evidence="1">
    <location>
        <begin position="88"/>
        <end position="108"/>
    </location>
</feature>
<gene>
    <name evidence="1" type="primary">ndhC</name>
</gene>
<evidence type="ECO:0000255" key="1">
    <source>
        <dbReference type="HAMAP-Rule" id="MF_01394"/>
    </source>
</evidence>
<protein>
    <recommendedName>
        <fullName evidence="1">NAD(P)H-quinone oxidoreductase subunit 3, chloroplastic</fullName>
        <ecNumber evidence="1">7.1.1.-</ecNumber>
    </recommendedName>
    <alternativeName>
        <fullName evidence="1">NAD(P)H dehydrogenase subunit 3</fullName>
    </alternativeName>
    <alternativeName>
        <fullName evidence="1">NADH-plastoquinone oxidoreductase subunit 3</fullName>
    </alternativeName>
</protein>
<comment type="function">
    <text evidence="1">NDH shuttles electrons from NAD(P)H:plastoquinone, via FMN and iron-sulfur (Fe-S) centers, to quinones in the photosynthetic chain and possibly in a chloroplast respiratory chain. The immediate electron acceptor for the enzyme in this species is believed to be plastoquinone. Couples the redox reaction to proton translocation, and thus conserves the redox energy in a proton gradient.</text>
</comment>
<comment type="catalytic activity">
    <reaction evidence="1">
        <text>a plastoquinone + NADH + (n+1) H(+)(in) = a plastoquinol + NAD(+) + n H(+)(out)</text>
        <dbReference type="Rhea" id="RHEA:42608"/>
        <dbReference type="Rhea" id="RHEA-COMP:9561"/>
        <dbReference type="Rhea" id="RHEA-COMP:9562"/>
        <dbReference type="ChEBI" id="CHEBI:15378"/>
        <dbReference type="ChEBI" id="CHEBI:17757"/>
        <dbReference type="ChEBI" id="CHEBI:57540"/>
        <dbReference type="ChEBI" id="CHEBI:57945"/>
        <dbReference type="ChEBI" id="CHEBI:62192"/>
    </reaction>
</comment>
<comment type="catalytic activity">
    <reaction evidence="1">
        <text>a plastoquinone + NADPH + (n+1) H(+)(in) = a plastoquinol + NADP(+) + n H(+)(out)</text>
        <dbReference type="Rhea" id="RHEA:42612"/>
        <dbReference type="Rhea" id="RHEA-COMP:9561"/>
        <dbReference type="Rhea" id="RHEA-COMP:9562"/>
        <dbReference type="ChEBI" id="CHEBI:15378"/>
        <dbReference type="ChEBI" id="CHEBI:17757"/>
        <dbReference type="ChEBI" id="CHEBI:57783"/>
        <dbReference type="ChEBI" id="CHEBI:58349"/>
        <dbReference type="ChEBI" id="CHEBI:62192"/>
    </reaction>
</comment>
<comment type="subunit">
    <text evidence="1">NDH is composed of at least 16 different subunits, 5 of which are encoded in the nucleus.</text>
</comment>
<comment type="subcellular location">
    <subcellularLocation>
        <location evidence="1">Plastid</location>
        <location evidence="1">Chloroplast thylakoid membrane</location>
        <topology evidence="1">Multi-pass membrane protein</topology>
    </subcellularLocation>
</comment>
<comment type="similarity">
    <text evidence="1">Belongs to the complex I subunit 3 family.</text>
</comment>
<name>NU3C_CAPBU</name>
<organism>
    <name type="scientific">Capsella bursa-pastoris</name>
    <name type="common">Shepherd's purse</name>
    <name type="synonym">Thlaspi bursa-pastoris</name>
    <dbReference type="NCBI Taxonomy" id="3719"/>
    <lineage>
        <taxon>Eukaryota</taxon>
        <taxon>Viridiplantae</taxon>
        <taxon>Streptophyta</taxon>
        <taxon>Embryophyta</taxon>
        <taxon>Tracheophyta</taxon>
        <taxon>Spermatophyta</taxon>
        <taxon>Magnoliopsida</taxon>
        <taxon>eudicotyledons</taxon>
        <taxon>Gunneridae</taxon>
        <taxon>Pentapetalae</taxon>
        <taxon>rosids</taxon>
        <taxon>malvids</taxon>
        <taxon>Brassicales</taxon>
        <taxon>Brassicaceae</taxon>
        <taxon>Camelineae</taxon>
        <taxon>Capsella</taxon>
    </lineage>
</organism>
<dbReference type="EC" id="7.1.1.-" evidence="1"/>
<dbReference type="EMBL" id="AP009371">
    <property type="protein sequence ID" value="BAF50202.1"/>
    <property type="molecule type" value="Genomic_DNA"/>
</dbReference>
<dbReference type="RefSeq" id="YP_001123378.1">
    <property type="nucleotide sequence ID" value="NC_009270.1"/>
</dbReference>
<dbReference type="SMR" id="A4QKJ7"/>
<dbReference type="GeneID" id="4961620"/>
<dbReference type="GO" id="GO:0009535">
    <property type="term" value="C:chloroplast thylakoid membrane"/>
    <property type="evidence" value="ECO:0007669"/>
    <property type="project" value="UniProtKB-SubCell"/>
</dbReference>
<dbReference type="GO" id="GO:0030964">
    <property type="term" value="C:NADH dehydrogenase complex"/>
    <property type="evidence" value="ECO:0007669"/>
    <property type="project" value="TreeGrafter"/>
</dbReference>
<dbReference type="GO" id="GO:0008137">
    <property type="term" value="F:NADH dehydrogenase (ubiquinone) activity"/>
    <property type="evidence" value="ECO:0007669"/>
    <property type="project" value="InterPro"/>
</dbReference>
<dbReference type="GO" id="GO:0048038">
    <property type="term" value="F:quinone binding"/>
    <property type="evidence" value="ECO:0007669"/>
    <property type="project" value="UniProtKB-KW"/>
</dbReference>
<dbReference type="GO" id="GO:0019684">
    <property type="term" value="P:photosynthesis, light reaction"/>
    <property type="evidence" value="ECO:0007669"/>
    <property type="project" value="UniProtKB-UniRule"/>
</dbReference>
<dbReference type="FunFam" id="1.20.58.1610:FF:000001">
    <property type="entry name" value="NAD(P)H-quinone oxidoreductase subunit 3, chloroplastic"/>
    <property type="match status" value="1"/>
</dbReference>
<dbReference type="Gene3D" id="1.20.58.1610">
    <property type="entry name" value="NADH:ubiquinone/plastoquinone oxidoreductase, chain 3"/>
    <property type="match status" value="1"/>
</dbReference>
<dbReference type="HAMAP" id="MF_01394">
    <property type="entry name" value="NDH1_NuoA"/>
    <property type="match status" value="1"/>
</dbReference>
<dbReference type="InterPro" id="IPR023043">
    <property type="entry name" value="NAD(P)H_OxRDtase_bac/plastid"/>
</dbReference>
<dbReference type="InterPro" id="IPR000440">
    <property type="entry name" value="NADH_UbQ/plastoQ_OxRdtase_su3"/>
</dbReference>
<dbReference type="InterPro" id="IPR038430">
    <property type="entry name" value="NDAH_ubi_oxred_su3_sf"/>
</dbReference>
<dbReference type="PANTHER" id="PTHR11058">
    <property type="entry name" value="NADH-UBIQUINONE OXIDOREDUCTASE CHAIN 3"/>
    <property type="match status" value="1"/>
</dbReference>
<dbReference type="PANTHER" id="PTHR11058:SF9">
    <property type="entry name" value="NADH-UBIQUINONE OXIDOREDUCTASE CHAIN 3"/>
    <property type="match status" value="1"/>
</dbReference>
<dbReference type="Pfam" id="PF00507">
    <property type="entry name" value="Oxidored_q4"/>
    <property type="match status" value="1"/>
</dbReference>
<keyword id="KW-0150">Chloroplast</keyword>
<keyword id="KW-0472">Membrane</keyword>
<keyword id="KW-0520">NAD</keyword>
<keyword id="KW-0521">NADP</keyword>
<keyword id="KW-0934">Plastid</keyword>
<keyword id="KW-0618">Plastoquinone</keyword>
<keyword id="KW-0874">Quinone</keyword>
<keyword id="KW-0793">Thylakoid</keyword>
<keyword id="KW-1278">Translocase</keyword>
<keyword id="KW-0812">Transmembrane</keyword>
<keyword id="KW-1133">Transmembrane helix</keyword>
<keyword id="KW-0813">Transport</keyword>
<proteinExistence type="inferred from homology"/>
<reference key="1">
    <citation type="submission" date="2007-03" db="EMBL/GenBank/DDBJ databases">
        <title>Sequencing analysis of Capsella bursa-pastoris JO22 chloroplast DNA.</title>
        <authorList>
            <person name="Hosouchi T."/>
            <person name="Tsuruoka H."/>
            <person name="Kotani H."/>
        </authorList>
    </citation>
    <scope>NUCLEOTIDE SEQUENCE [LARGE SCALE GENOMIC DNA]</scope>
</reference>
<sequence length="120" mass="13825">MFLLYEYDIFWAFLIISSAIPVLAFLISGVLSPIRKGPEKLSSYESGIDPIGDAWLQFRIRYYMFALVFVVFDVETVFLYPWAMSFDVLGVSAFIEAFIFVLILILGLVYAWRKGALEWS</sequence>
<accession>A4QKJ7</accession>
<geneLocation type="chloroplast"/>